<organism>
    <name type="scientific">Bos taurus</name>
    <name type="common">Bovine</name>
    <dbReference type="NCBI Taxonomy" id="9913"/>
    <lineage>
        <taxon>Eukaryota</taxon>
        <taxon>Metazoa</taxon>
        <taxon>Chordata</taxon>
        <taxon>Craniata</taxon>
        <taxon>Vertebrata</taxon>
        <taxon>Euteleostomi</taxon>
        <taxon>Mammalia</taxon>
        <taxon>Eutheria</taxon>
        <taxon>Laurasiatheria</taxon>
        <taxon>Artiodactyla</taxon>
        <taxon>Ruminantia</taxon>
        <taxon>Pecora</taxon>
        <taxon>Bovidae</taxon>
        <taxon>Bovinae</taxon>
        <taxon>Bos</taxon>
    </lineage>
</organism>
<proteinExistence type="evidence at transcript level"/>
<accession>Q3SZT1</accession>
<name>GSG1_BOVIN</name>
<keyword id="KW-0025">Alternative splicing</keyword>
<keyword id="KW-0256">Endoplasmic reticulum</keyword>
<keyword id="KW-0472">Membrane</keyword>
<keyword id="KW-1185">Reference proteome</keyword>
<keyword id="KW-0812">Transmembrane</keyword>
<keyword id="KW-1133">Transmembrane helix</keyword>
<comment type="function">
    <text evidence="1">May cause the redistribution of PAPOLB from the cytosol to the endoplasmic reticulum.</text>
</comment>
<comment type="subunit">
    <text evidence="1">Interacts with PAPOLB.</text>
</comment>
<comment type="subcellular location">
    <subcellularLocation>
        <location evidence="1">Endoplasmic reticulum membrane</location>
        <topology evidence="1">Multi-pass membrane protein</topology>
    </subcellularLocation>
    <text evidence="1">Colocalizes with PAPOLB in the endoplasmic reticulum.</text>
</comment>
<comment type="alternative products">
    <event type="alternative splicing"/>
    <isoform>
        <id>Q3SZT1-1</id>
        <name>1</name>
        <sequence type="displayed"/>
    </isoform>
    <isoform>
        <id>Q3SZT1-2</id>
        <name>2</name>
        <sequence type="described" ref="VSP_032990 VSP_032991"/>
    </isoform>
</comment>
<comment type="similarity">
    <text evidence="5">Belongs to the GSG1 family.</text>
</comment>
<comment type="sequence caution" evidence="5">
    <conflict type="erroneous initiation">
        <sequence resource="EMBL-CDS" id="AAI02723"/>
    </conflict>
</comment>
<evidence type="ECO:0000250" key="1"/>
<evidence type="ECO:0000255" key="2"/>
<evidence type="ECO:0000256" key="3">
    <source>
        <dbReference type="SAM" id="MobiDB-lite"/>
    </source>
</evidence>
<evidence type="ECO:0000303" key="4">
    <source ref="2"/>
</evidence>
<evidence type="ECO:0000305" key="5"/>
<feature type="chain" id="PRO_0000329460" description="Germ cell-specific gene 1 protein">
    <location>
        <begin position="1"/>
        <end position="323"/>
    </location>
</feature>
<feature type="transmembrane region" description="Helical" evidence="2">
    <location>
        <begin position="17"/>
        <end position="37"/>
    </location>
</feature>
<feature type="transmembrane region" description="Helical" evidence="2">
    <location>
        <begin position="133"/>
        <end position="153"/>
    </location>
</feature>
<feature type="transmembrane region" description="Helical" evidence="2">
    <location>
        <begin position="164"/>
        <end position="184"/>
    </location>
</feature>
<feature type="transmembrane region" description="Helical" evidence="2">
    <location>
        <begin position="208"/>
        <end position="228"/>
    </location>
</feature>
<feature type="region of interest" description="Disordered" evidence="3">
    <location>
        <begin position="302"/>
        <end position="323"/>
    </location>
</feature>
<feature type="splice variant" id="VSP_032990" description="In isoform 2." evidence="4">
    <original>M</original>
    <variation>MSNSSQLIQNVCLTQKM</variation>
    <location>
        <position position="1"/>
    </location>
</feature>
<feature type="splice variant" id="VSP_032991" description="In isoform 2." evidence="4">
    <original>E</original>
    <variation>GEKGLLEFATLQGPRHPTLRFGGKRLMEKASLSHPPLGLVAK</variation>
    <location>
        <position position="123"/>
    </location>
</feature>
<feature type="sequence conflict" description="In Ref. 2; AAI02723." evidence="5" ref="2">
    <original>H</original>
    <variation>Q</variation>
    <location>
        <position position="181"/>
    </location>
</feature>
<reference key="1">
    <citation type="journal article" date="2009" name="Science">
        <title>The genome sequence of taurine cattle: a window to ruminant biology and evolution.</title>
        <authorList>
            <consortium name="The bovine genome sequencing and analysis consortium"/>
        </authorList>
    </citation>
    <scope>NUCLEOTIDE SEQUENCE [LARGE SCALE GENOMIC DNA]</scope>
    <source>
        <strain>Hereford</strain>
    </source>
</reference>
<reference key="2">
    <citation type="submission" date="2005-08" db="EMBL/GenBank/DDBJ databases">
        <authorList>
            <consortium name="NIH - Mammalian Gene Collection (MGC) project"/>
        </authorList>
    </citation>
    <scope>NUCLEOTIDE SEQUENCE [LARGE SCALE MRNA] (ISOFORM 2)</scope>
    <source>
        <strain>Crossbred X Angus</strain>
        <tissue>Liver</tissue>
    </source>
</reference>
<gene>
    <name type="primary">GSG1</name>
</gene>
<sequence>MGLPKGFSSQRKRLSAVLNMLSLSLSTASLLSNYWFVGTQKVPKPLCGKGLPAKCFDVPVPLDGGGTNASSPEVVHYSWETGDDRFTFHAFRSGMWLSCAEIMEEPGERCRSFLELTPPTEREILWLSLGAQFAYIGLELISFILLLTDLLFTGNPGCSLKLSAFAAISSVLSGLLGMVGHMMYSQVFQATANLGPEDWRPHAWNYGWAFYTAWVSFTCCMASAVTTFNTYTRLVLEFKCRHSKSFRGAPGCQPHHHQCFLQQLACTAHPGGPVTSYPQFHCQPIRSISEGVDFYSELHDKELQQGSSQEPETKAAGSSVEEC</sequence>
<protein>
    <recommendedName>
        <fullName>Germ cell-specific gene 1 protein</fullName>
    </recommendedName>
</protein>
<dbReference type="EMBL" id="AAFC03054665">
    <property type="status" value="NOT_ANNOTATED_CDS"/>
    <property type="molecule type" value="Genomic_DNA"/>
</dbReference>
<dbReference type="EMBL" id="BC102722">
    <property type="protein sequence ID" value="AAI02723.1"/>
    <property type="status" value="ALT_INIT"/>
    <property type="molecule type" value="mRNA"/>
</dbReference>
<dbReference type="RefSeq" id="NP_001069401.2">
    <molecule id="Q3SZT1-2"/>
    <property type="nucleotide sequence ID" value="NM_001075933.2"/>
</dbReference>
<dbReference type="RefSeq" id="XP_015326740.1">
    <property type="nucleotide sequence ID" value="XM_015471254.1"/>
</dbReference>
<dbReference type="SMR" id="Q3SZT1"/>
<dbReference type="FunCoup" id="Q3SZT1">
    <property type="interactions" value="2"/>
</dbReference>
<dbReference type="STRING" id="9913.ENSBTAP00000006198"/>
<dbReference type="GeneID" id="530502"/>
<dbReference type="KEGG" id="bta:530502"/>
<dbReference type="CTD" id="83445"/>
<dbReference type="VEuPathDB" id="HostDB:ENSBTAG00000004721"/>
<dbReference type="HOGENOM" id="CLU_063057_0_0_1"/>
<dbReference type="InParanoid" id="Q3SZT1"/>
<dbReference type="OMA" id="AFYTAWL"/>
<dbReference type="OrthoDB" id="10001768at2759"/>
<dbReference type="TreeFam" id="TF331388"/>
<dbReference type="Proteomes" id="UP000009136">
    <property type="component" value="Chromosome 5"/>
</dbReference>
<dbReference type="Bgee" id="ENSBTAG00000004721">
    <property type="expression patterns" value="Expressed in semen and 31 other cell types or tissues"/>
</dbReference>
<dbReference type="GO" id="GO:0005789">
    <property type="term" value="C:endoplasmic reticulum membrane"/>
    <property type="evidence" value="ECO:0007669"/>
    <property type="project" value="UniProtKB-SubCell"/>
</dbReference>
<dbReference type="GO" id="GO:0005886">
    <property type="term" value="C:plasma membrane"/>
    <property type="evidence" value="ECO:0000318"/>
    <property type="project" value="GO_Central"/>
</dbReference>
<dbReference type="FunFam" id="1.20.140.150:FF:000034">
    <property type="entry name" value="Germ cell associated 1"/>
    <property type="match status" value="1"/>
</dbReference>
<dbReference type="Gene3D" id="1.20.140.150">
    <property type="match status" value="1"/>
</dbReference>
<dbReference type="InterPro" id="IPR012478">
    <property type="entry name" value="GSG-1"/>
</dbReference>
<dbReference type="InterPro" id="IPR050579">
    <property type="entry name" value="PMP-22/EMP/MP20-like"/>
</dbReference>
<dbReference type="PANTHER" id="PTHR10671">
    <property type="entry name" value="EPITHELIAL MEMBRANE PROTEIN-RELATED"/>
    <property type="match status" value="1"/>
</dbReference>
<dbReference type="PANTHER" id="PTHR10671:SF43">
    <property type="entry name" value="GERM CELL-SPECIFIC GENE 1 PROTEIN"/>
    <property type="match status" value="1"/>
</dbReference>
<dbReference type="Pfam" id="PF07803">
    <property type="entry name" value="GSG-1"/>
    <property type="match status" value="1"/>
</dbReference>